<dbReference type="EC" id="4.2.2.n1" evidence="1"/>
<dbReference type="EMBL" id="CP000822">
    <property type="protein sequence ID" value="ABV15395.1"/>
    <property type="status" value="ALT_INIT"/>
    <property type="molecule type" value="Genomic_DNA"/>
</dbReference>
<dbReference type="RefSeq" id="WP_024130939.1">
    <property type="nucleotide sequence ID" value="NC_009792.1"/>
</dbReference>
<dbReference type="SMR" id="A8API2"/>
<dbReference type="STRING" id="290338.CKO_04338"/>
<dbReference type="CAZy" id="GH23">
    <property type="family name" value="Glycoside Hydrolase Family 23"/>
</dbReference>
<dbReference type="GeneID" id="45137928"/>
<dbReference type="KEGG" id="cko:CKO_04338"/>
<dbReference type="HOGENOM" id="CLU_044583_0_0_6"/>
<dbReference type="OrthoDB" id="5620293at2"/>
<dbReference type="Proteomes" id="UP000008148">
    <property type="component" value="Chromosome"/>
</dbReference>
<dbReference type="GO" id="GO:0009279">
    <property type="term" value="C:cell outer membrane"/>
    <property type="evidence" value="ECO:0007669"/>
    <property type="project" value="UniProtKB-SubCell"/>
</dbReference>
<dbReference type="GO" id="GO:0016798">
    <property type="term" value="F:hydrolase activity, acting on glycosyl bonds"/>
    <property type="evidence" value="ECO:0007669"/>
    <property type="project" value="InterPro"/>
</dbReference>
<dbReference type="GO" id="GO:0008933">
    <property type="term" value="F:peptidoglycan lytic transglycosylase activity"/>
    <property type="evidence" value="ECO:0007669"/>
    <property type="project" value="UniProtKB-UniRule"/>
</dbReference>
<dbReference type="GO" id="GO:0016998">
    <property type="term" value="P:cell wall macromolecule catabolic process"/>
    <property type="evidence" value="ECO:0007669"/>
    <property type="project" value="UniProtKB-UniRule"/>
</dbReference>
<dbReference type="GO" id="GO:0071555">
    <property type="term" value="P:cell wall organization"/>
    <property type="evidence" value="ECO:0007669"/>
    <property type="project" value="UniProtKB-KW"/>
</dbReference>
<dbReference type="GO" id="GO:0000270">
    <property type="term" value="P:peptidoglycan metabolic process"/>
    <property type="evidence" value="ECO:0007669"/>
    <property type="project" value="InterPro"/>
</dbReference>
<dbReference type="CDD" id="cd16893">
    <property type="entry name" value="LT_MltC_MltE"/>
    <property type="match status" value="1"/>
</dbReference>
<dbReference type="FunFam" id="1.10.530.10:FF:000002">
    <property type="entry name" value="Membrane-bound lytic murein transglycosylase C"/>
    <property type="match status" value="1"/>
</dbReference>
<dbReference type="Gene3D" id="1.10.530.10">
    <property type="match status" value="1"/>
</dbReference>
<dbReference type="HAMAP" id="MF_01616">
    <property type="entry name" value="MltC"/>
    <property type="match status" value="1"/>
</dbReference>
<dbReference type="InterPro" id="IPR023346">
    <property type="entry name" value="Lysozyme-like_dom_sf"/>
</dbReference>
<dbReference type="InterPro" id="IPR023664">
    <property type="entry name" value="Murein_transglycosylaseC"/>
</dbReference>
<dbReference type="InterPro" id="IPR024570">
    <property type="entry name" value="Murein_transglycosylaseC_N"/>
</dbReference>
<dbReference type="InterPro" id="IPR000189">
    <property type="entry name" value="Transglyc_AS"/>
</dbReference>
<dbReference type="InterPro" id="IPR008258">
    <property type="entry name" value="Transglycosylase_SLT_dom_1"/>
</dbReference>
<dbReference type="NCBIfam" id="NF008670">
    <property type="entry name" value="PRK11671.1"/>
    <property type="match status" value="1"/>
</dbReference>
<dbReference type="PANTHER" id="PTHR37423:SF2">
    <property type="entry name" value="MEMBRANE-BOUND LYTIC MUREIN TRANSGLYCOSYLASE C"/>
    <property type="match status" value="1"/>
</dbReference>
<dbReference type="PANTHER" id="PTHR37423">
    <property type="entry name" value="SOLUBLE LYTIC MUREIN TRANSGLYCOSYLASE-RELATED"/>
    <property type="match status" value="1"/>
</dbReference>
<dbReference type="Pfam" id="PF11873">
    <property type="entry name" value="Mltc_N"/>
    <property type="match status" value="1"/>
</dbReference>
<dbReference type="Pfam" id="PF01464">
    <property type="entry name" value="SLT"/>
    <property type="match status" value="1"/>
</dbReference>
<dbReference type="SUPFAM" id="SSF53955">
    <property type="entry name" value="Lysozyme-like"/>
    <property type="match status" value="1"/>
</dbReference>
<dbReference type="PROSITE" id="PS51257">
    <property type="entry name" value="PROKAR_LIPOPROTEIN"/>
    <property type="match status" value="1"/>
</dbReference>
<dbReference type="PROSITE" id="PS00922">
    <property type="entry name" value="TRANSGLYCOSYLASE"/>
    <property type="match status" value="1"/>
</dbReference>
<gene>
    <name evidence="1" type="primary">mltC</name>
    <name type="ordered locus">CKO_04338</name>
</gene>
<feature type="signal peptide" evidence="1">
    <location>
        <begin position="1"/>
        <end position="16"/>
    </location>
</feature>
<feature type="chain" id="PRO_0000335577" description="Membrane-bound lytic murein transglycosylase C">
    <location>
        <begin position="17"/>
        <end position="360"/>
    </location>
</feature>
<feature type="lipid moiety-binding region" description="N-palmitoyl cysteine" evidence="1">
    <location>
        <position position="17"/>
    </location>
</feature>
<feature type="lipid moiety-binding region" description="S-diacylglycerol cysteine" evidence="1">
    <location>
        <position position="17"/>
    </location>
</feature>
<organism>
    <name type="scientific">Citrobacter koseri (strain ATCC BAA-895 / CDC 4225-83 / SGSC4696)</name>
    <dbReference type="NCBI Taxonomy" id="290338"/>
    <lineage>
        <taxon>Bacteria</taxon>
        <taxon>Pseudomonadati</taxon>
        <taxon>Pseudomonadota</taxon>
        <taxon>Gammaproteobacteria</taxon>
        <taxon>Enterobacterales</taxon>
        <taxon>Enterobacteriaceae</taxon>
        <taxon>Citrobacter</taxon>
    </lineage>
</organism>
<comment type="function">
    <text evidence="1">Murein-degrading enzyme. May play a role in recycling of muropeptides during cell elongation and/or cell division.</text>
</comment>
<comment type="catalytic activity">
    <reaction evidence="1">
        <text>Exolytic cleavage of the (1-&gt;4)-beta-glycosidic linkage between N-acetylmuramic acid (MurNAc) and N-acetylglucosamine (GlcNAc) residues in peptidoglycan, from either the reducing or the non-reducing ends of the peptidoglycan chains, with concomitant formation of a 1,6-anhydrobond in the MurNAc residue.</text>
        <dbReference type="EC" id="4.2.2.n1"/>
    </reaction>
</comment>
<comment type="subcellular location">
    <subcellularLocation>
        <location evidence="1">Cell outer membrane</location>
        <topology evidence="1">Lipid-anchor</topology>
    </subcellularLocation>
</comment>
<comment type="similarity">
    <text evidence="1">Belongs to the transglycosylase Slt family.</text>
</comment>
<comment type="sequence caution" evidence="2">
    <conflict type="erroneous initiation">
        <sequence resource="EMBL-CDS" id="ABV15395"/>
    </conflict>
</comment>
<name>MLTC_CITK8</name>
<keyword id="KW-0998">Cell outer membrane</keyword>
<keyword id="KW-0961">Cell wall biogenesis/degradation</keyword>
<keyword id="KW-0449">Lipoprotein</keyword>
<keyword id="KW-0456">Lyase</keyword>
<keyword id="KW-0472">Membrane</keyword>
<keyword id="KW-0564">Palmitate</keyword>
<keyword id="KW-1185">Reference proteome</keyword>
<keyword id="KW-0732">Signal</keyword>
<sequence>MKKFFALALVAPLLISCSSSTKKGDTYNEAWVKDTNGFDILMGQFAHNIENLWGFKEVLIAGPKDYVKYTDQYQTRSHINFDDGTITVETIAGTEPAAHLRRAIIKTLLMGDDPGSVDLYSDVDDIQISREPFLYGQVVDNTGQPIRWEGRATNFADYLLKTRLKSRSNGLRIIYSVTINLVPNHLDKRAHKYVGMVRQAARKYGVDESLILAIMQTESSFNPYAVSRSDALGLMQVVQHTAGKDVFRSQGKSGTPGRSFLFDPASNIDTGTAYLAMLNNVYLGGIDNPTSRRYAVITAYNGGAGSVLRVFSNDKVQAANIINSMSPGDVYQTLTTRHPSAESRRYLYKVNATQKSYRRK</sequence>
<protein>
    <recommendedName>
        <fullName evidence="1">Membrane-bound lytic murein transglycosylase C</fullName>
        <ecNumber evidence="1">4.2.2.n1</ecNumber>
    </recommendedName>
    <alternativeName>
        <fullName evidence="1">Murein lyase C</fullName>
    </alternativeName>
</protein>
<accession>A8API2</accession>
<evidence type="ECO:0000255" key="1">
    <source>
        <dbReference type="HAMAP-Rule" id="MF_01616"/>
    </source>
</evidence>
<evidence type="ECO:0000305" key="2"/>
<proteinExistence type="inferred from homology"/>
<reference key="1">
    <citation type="submission" date="2007-08" db="EMBL/GenBank/DDBJ databases">
        <authorList>
            <consortium name="The Citrobacter koseri Genome Sequencing Project"/>
            <person name="McClelland M."/>
            <person name="Sanderson E.K."/>
            <person name="Porwollik S."/>
            <person name="Spieth J."/>
            <person name="Clifton W.S."/>
            <person name="Latreille P."/>
            <person name="Courtney L."/>
            <person name="Wang C."/>
            <person name="Pepin K."/>
            <person name="Bhonagiri V."/>
            <person name="Nash W."/>
            <person name="Johnson M."/>
            <person name="Thiruvilangam P."/>
            <person name="Wilson R."/>
        </authorList>
    </citation>
    <scope>NUCLEOTIDE SEQUENCE [LARGE SCALE GENOMIC DNA]</scope>
    <source>
        <strain>ATCC BAA-895 / CDC 4225-83 / SGSC4696</strain>
    </source>
</reference>